<keyword id="KW-1185">Reference proteome</keyword>
<protein>
    <recommendedName>
        <fullName evidence="1">UPF0102 protein PBPRA3228</fullName>
    </recommendedName>
</protein>
<name>Y3228_PHOPR</name>
<reference key="1">
    <citation type="journal article" date="2005" name="Science">
        <title>Life at depth: Photobacterium profundum genome sequence and expression analysis.</title>
        <authorList>
            <person name="Vezzi A."/>
            <person name="Campanaro S."/>
            <person name="D'Angelo M."/>
            <person name="Simonato F."/>
            <person name="Vitulo N."/>
            <person name="Lauro F.M."/>
            <person name="Cestaro A."/>
            <person name="Malacrida G."/>
            <person name="Simionati B."/>
            <person name="Cannata N."/>
            <person name="Romualdi C."/>
            <person name="Bartlett D.H."/>
            <person name="Valle G."/>
        </authorList>
    </citation>
    <scope>NUCLEOTIDE SEQUENCE [LARGE SCALE GENOMIC DNA]</scope>
    <source>
        <strain>ATCC BAA-1253 / SS9</strain>
    </source>
</reference>
<comment type="similarity">
    <text evidence="1">Belongs to the UPF0102 family.</text>
</comment>
<dbReference type="EMBL" id="CR378673">
    <property type="protein sequence ID" value="CAG21534.1"/>
    <property type="molecule type" value="Genomic_DNA"/>
</dbReference>
<dbReference type="RefSeq" id="WP_011219787.1">
    <property type="nucleotide sequence ID" value="NC_006370.1"/>
</dbReference>
<dbReference type="SMR" id="Q6LME3"/>
<dbReference type="STRING" id="298386.PBPRA3228"/>
<dbReference type="KEGG" id="ppr:PBPRA3228"/>
<dbReference type="eggNOG" id="COG0792">
    <property type="taxonomic scope" value="Bacteria"/>
</dbReference>
<dbReference type="HOGENOM" id="CLU_115353_1_1_6"/>
<dbReference type="Proteomes" id="UP000000593">
    <property type="component" value="Chromosome 1"/>
</dbReference>
<dbReference type="GO" id="GO:0003676">
    <property type="term" value="F:nucleic acid binding"/>
    <property type="evidence" value="ECO:0007669"/>
    <property type="project" value="InterPro"/>
</dbReference>
<dbReference type="CDD" id="cd20736">
    <property type="entry name" value="PoNe_Nuclease"/>
    <property type="match status" value="1"/>
</dbReference>
<dbReference type="Gene3D" id="3.40.1350.10">
    <property type="match status" value="1"/>
</dbReference>
<dbReference type="HAMAP" id="MF_00048">
    <property type="entry name" value="UPF0102"/>
    <property type="match status" value="1"/>
</dbReference>
<dbReference type="InterPro" id="IPR011335">
    <property type="entry name" value="Restrct_endonuc-II-like"/>
</dbReference>
<dbReference type="InterPro" id="IPR011856">
    <property type="entry name" value="tRNA_endonuc-like_dom_sf"/>
</dbReference>
<dbReference type="InterPro" id="IPR003509">
    <property type="entry name" value="UPF0102_YraN-like"/>
</dbReference>
<dbReference type="NCBIfam" id="NF009150">
    <property type="entry name" value="PRK12497.1-3"/>
    <property type="match status" value="1"/>
</dbReference>
<dbReference type="NCBIfam" id="TIGR00252">
    <property type="entry name" value="YraN family protein"/>
    <property type="match status" value="1"/>
</dbReference>
<dbReference type="PANTHER" id="PTHR34039">
    <property type="entry name" value="UPF0102 PROTEIN YRAN"/>
    <property type="match status" value="1"/>
</dbReference>
<dbReference type="PANTHER" id="PTHR34039:SF1">
    <property type="entry name" value="UPF0102 PROTEIN YRAN"/>
    <property type="match status" value="1"/>
</dbReference>
<dbReference type="Pfam" id="PF02021">
    <property type="entry name" value="UPF0102"/>
    <property type="match status" value="1"/>
</dbReference>
<dbReference type="SUPFAM" id="SSF52980">
    <property type="entry name" value="Restriction endonuclease-like"/>
    <property type="match status" value="1"/>
</dbReference>
<organism>
    <name type="scientific">Photobacterium profundum (strain SS9)</name>
    <dbReference type="NCBI Taxonomy" id="298386"/>
    <lineage>
        <taxon>Bacteria</taxon>
        <taxon>Pseudomonadati</taxon>
        <taxon>Pseudomonadota</taxon>
        <taxon>Gammaproteobacteria</taxon>
        <taxon>Vibrionales</taxon>
        <taxon>Vibrionaceae</taxon>
        <taxon>Photobacterium</taxon>
    </lineage>
</organism>
<sequence length="125" mass="14701">MVSPLPLNKRQQGQVYEVMAEQYLQRHHLKPVERNFTCRSGEIDLIMRDKSCVVFVEVKFRKQNHFGSAAEAVNWRKQQKLKRAALLWLKKNSLSTEHTEFRFDVVAIQGPDQQIEWFTNTLVEG</sequence>
<feature type="chain" id="PRO_0000336221" description="UPF0102 protein PBPRA3228">
    <location>
        <begin position="1"/>
        <end position="125"/>
    </location>
</feature>
<accession>Q6LME3</accession>
<evidence type="ECO:0000255" key="1">
    <source>
        <dbReference type="HAMAP-Rule" id="MF_00048"/>
    </source>
</evidence>
<gene>
    <name type="ordered locus">PBPRA3228</name>
</gene>
<proteinExistence type="inferred from homology"/>